<proteinExistence type="inferred from homology"/>
<comment type="function">
    <text evidence="1">Forms part of the ribosomal stalk which helps the ribosome interact with GTP-bound translation factors.</text>
</comment>
<comment type="subunit">
    <text evidence="1">Part of the ribosomal stalk of the 50S ribosomal subunit. Interacts with L10 and the large rRNA to form the base of the stalk. L10 forms an elongated spine to which L12 dimers bind in a sequential fashion forming a multimeric L10(L12)X complex.</text>
</comment>
<comment type="PTM">
    <text evidence="1">One or more lysine residues are methylated.</text>
</comment>
<comment type="similarity">
    <text evidence="1">Belongs to the universal ribosomal protein uL11 family.</text>
</comment>
<name>RL11_LEPIC</name>
<gene>
    <name evidence="1" type="primary">rplK</name>
    <name type="ordered locus">LIC_10749</name>
</gene>
<accession>P62436</accession>
<evidence type="ECO:0000255" key="1">
    <source>
        <dbReference type="HAMAP-Rule" id="MF_00736"/>
    </source>
</evidence>
<evidence type="ECO:0000305" key="2"/>
<keyword id="KW-0488">Methylation</keyword>
<keyword id="KW-0687">Ribonucleoprotein</keyword>
<keyword id="KW-0689">Ribosomal protein</keyword>
<keyword id="KW-0694">RNA-binding</keyword>
<keyword id="KW-0699">rRNA-binding</keyword>
<dbReference type="EMBL" id="AE016823">
    <property type="protein sequence ID" value="AAS69366.1"/>
    <property type="molecule type" value="Genomic_DNA"/>
</dbReference>
<dbReference type="RefSeq" id="WP_000729204.1">
    <property type="nucleotide sequence ID" value="NC_005823.1"/>
</dbReference>
<dbReference type="SMR" id="P62436"/>
<dbReference type="GeneID" id="61144089"/>
<dbReference type="KEGG" id="lic:LIC_10749"/>
<dbReference type="HOGENOM" id="CLU_074237_2_0_12"/>
<dbReference type="Proteomes" id="UP000007037">
    <property type="component" value="Chromosome I"/>
</dbReference>
<dbReference type="GO" id="GO:0022625">
    <property type="term" value="C:cytosolic large ribosomal subunit"/>
    <property type="evidence" value="ECO:0007669"/>
    <property type="project" value="TreeGrafter"/>
</dbReference>
<dbReference type="GO" id="GO:0070180">
    <property type="term" value="F:large ribosomal subunit rRNA binding"/>
    <property type="evidence" value="ECO:0007669"/>
    <property type="project" value="UniProtKB-UniRule"/>
</dbReference>
<dbReference type="GO" id="GO:0003735">
    <property type="term" value="F:structural constituent of ribosome"/>
    <property type="evidence" value="ECO:0007669"/>
    <property type="project" value="InterPro"/>
</dbReference>
<dbReference type="GO" id="GO:0006412">
    <property type="term" value="P:translation"/>
    <property type="evidence" value="ECO:0007669"/>
    <property type="project" value="UniProtKB-UniRule"/>
</dbReference>
<dbReference type="CDD" id="cd00349">
    <property type="entry name" value="Ribosomal_L11"/>
    <property type="match status" value="1"/>
</dbReference>
<dbReference type="FunFam" id="1.10.10.250:FF:000001">
    <property type="entry name" value="50S ribosomal protein L11"/>
    <property type="match status" value="1"/>
</dbReference>
<dbReference type="FunFam" id="3.30.1550.10:FF:000001">
    <property type="entry name" value="50S ribosomal protein L11"/>
    <property type="match status" value="1"/>
</dbReference>
<dbReference type="Gene3D" id="1.10.10.250">
    <property type="entry name" value="Ribosomal protein L11, C-terminal domain"/>
    <property type="match status" value="1"/>
</dbReference>
<dbReference type="Gene3D" id="3.30.1550.10">
    <property type="entry name" value="Ribosomal protein L11/L12, N-terminal domain"/>
    <property type="match status" value="1"/>
</dbReference>
<dbReference type="HAMAP" id="MF_00736">
    <property type="entry name" value="Ribosomal_uL11"/>
    <property type="match status" value="1"/>
</dbReference>
<dbReference type="InterPro" id="IPR000911">
    <property type="entry name" value="Ribosomal_uL11"/>
</dbReference>
<dbReference type="InterPro" id="IPR006519">
    <property type="entry name" value="Ribosomal_uL11_bac-typ"/>
</dbReference>
<dbReference type="InterPro" id="IPR020783">
    <property type="entry name" value="Ribosomal_uL11_C"/>
</dbReference>
<dbReference type="InterPro" id="IPR036769">
    <property type="entry name" value="Ribosomal_uL11_C_sf"/>
</dbReference>
<dbReference type="InterPro" id="IPR020785">
    <property type="entry name" value="Ribosomal_uL11_CS"/>
</dbReference>
<dbReference type="InterPro" id="IPR020784">
    <property type="entry name" value="Ribosomal_uL11_N"/>
</dbReference>
<dbReference type="InterPro" id="IPR036796">
    <property type="entry name" value="Ribosomal_uL11_N_sf"/>
</dbReference>
<dbReference type="NCBIfam" id="TIGR01632">
    <property type="entry name" value="L11_bact"/>
    <property type="match status" value="1"/>
</dbReference>
<dbReference type="PANTHER" id="PTHR11661">
    <property type="entry name" value="60S RIBOSOMAL PROTEIN L12"/>
    <property type="match status" value="1"/>
</dbReference>
<dbReference type="PANTHER" id="PTHR11661:SF1">
    <property type="entry name" value="LARGE RIBOSOMAL SUBUNIT PROTEIN UL11M"/>
    <property type="match status" value="1"/>
</dbReference>
<dbReference type="Pfam" id="PF00298">
    <property type="entry name" value="Ribosomal_L11"/>
    <property type="match status" value="1"/>
</dbReference>
<dbReference type="Pfam" id="PF03946">
    <property type="entry name" value="Ribosomal_L11_N"/>
    <property type="match status" value="1"/>
</dbReference>
<dbReference type="SMART" id="SM00649">
    <property type="entry name" value="RL11"/>
    <property type="match status" value="1"/>
</dbReference>
<dbReference type="SUPFAM" id="SSF54747">
    <property type="entry name" value="Ribosomal L11/L12e N-terminal domain"/>
    <property type="match status" value="1"/>
</dbReference>
<dbReference type="SUPFAM" id="SSF46906">
    <property type="entry name" value="Ribosomal protein L11, C-terminal domain"/>
    <property type="match status" value="1"/>
</dbReference>
<dbReference type="PROSITE" id="PS00359">
    <property type="entry name" value="RIBOSOMAL_L11"/>
    <property type="match status" value="1"/>
</dbReference>
<sequence length="142" mass="15108">MAAKKVVKQIKLQVEAGKANPAPPVGPALGQAGLNIMEFCKQFNERSKAQIGLKLPVVITVFSDRSFTFITKSPPAALLVKKAIGLETGSATPHTHKVGKITRKQLEEIAKTKMEDLNANDIDAAVNIIAGTCRSMGVTVEA</sequence>
<reference key="1">
    <citation type="journal article" date="2004" name="J. Bacteriol.">
        <title>Comparative genomics of two Leptospira interrogans serovars reveals novel insights into physiology and pathogenesis.</title>
        <authorList>
            <person name="Nascimento A.L.T.O."/>
            <person name="Ko A.I."/>
            <person name="Martins E.A.L."/>
            <person name="Monteiro-Vitorello C.B."/>
            <person name="Ho P.L."/>
            <person name="Haake D.A."/>
            <person name="Verjovski-Almeida S."/>
            <person name="Hartskeerl R.A."/>
            <person name="Marques M.V."/>
            <person name="Oliveira M.C."/>
            <person name="Menck C.F.M."/>
            <person name="Leite L.C.C."/>
            <person name="Carrer H."/>
            <person name="Coutinho L.L."/>
            <person name="Degrave W.M."/>
            <person name="Dellagostin O.A."/>
            <person name="El-Dorry H."/>
            <person name="Ferro E.S."/>
            <person name="Ferro M.I.T."/>
            <person name="Furlan L.R."/>
            <person name="Gamberini M."/>
            <person name="Giglioti E.A."/>
            <person name="Goes-Neto A."/>
            <person name="Goldman G.H."/>
            <person name="Goldman M.H.S."/>
            <person name="Harakava R."/>
            <person name="Jeronimo S.M.B."/>
            <person name="Junqueira-de-Azevedo I.L.M."/>
            <person name="Kimura E.T."/>
            <person name="Kuramae E.E."/>
            <person name="Lemos E.G.M."/>
            <person name="Lemos M.V.F."/>
            <person name="Marino C.L."/>
            <person name="Nunes L.R."/>
            <person name="de Oliveira R.C."/>
            <person name="Pereira G.G."/>
            <person name="Reis M.S."/>
            <person name="Schriefer A."/>
            <person name="Siqueira W.J."/>
            <person name="Sommer P."/>
            <person name="Tsai S.M."/>
            <person name="Simpson A.J.G."/>
            <person name="Ferro J.A."/>
            <person name="Camargo L.E.A."/>
            <person name="Kitajima J.P."/>
            <person name="Setubal J.C."/>
            <person name="Van Sluys M.A."/>
        </authorList>
    </citation>
    <scope>NUCLEOTIDE SEQUENCE [LARGE SCALE GENOMIC DNA]</scope>
    <source>
        <strain>Fiocruz L1-130</strain>
    </source>
</reference>
<organism>
    <name type="scientific">Leptospira interrogans serogroup Icterohaemorrhagiae serovar copenhageni (strain Fiocruz L1-130)</name>
    <dbReference type="NCBI Taxonomy" id="267671"/>
    <lineage>
        <taxon>Bacteria</taxon>
        <taxon>Pseudomonadati</taxon>
        <taxon>Spirochaetota</taxon>
        <taxon>Spirochaetia</taxon>
        <taxon>Leptospirales</taxon>
        <taxon>Leptospiraceae</taxon>
        <taxon>Leptospira</taxon>
    </lineage>
</organism>
<feature type="chain" id="PRO_0000104306" description="Large ribosomal subunit protein uL11">
    <location>
        <begin position="1"/>
        <end position="142"/>
    </location>
</feature>
<protein>
    <recommendedName>
        <fullName evidence="1">Large ribosomal subunit protein uL11</fullName>
    </recommendedName>
    <alternativeName>
        <fullName evidence="2">50S ribosomal protein L11</fullName>
    </alternativeName>
</protein>